<proteinExistence type="inferred from homology"/>
<accession>Q5H6C7</accession>
<dbReference type="EMBL" id="AE013598">
    <property type="protein sequence ID" value="AAW73493.1"/>
    <property type="molecule type" value="Genomic_DNA"/>
</dbReference>
<dbReference type="SMR" id="Q5H6C7"/>
<dbReference type="STRING" id="291331.XOO0239"/>
<dbReference type="KEGG" id="xoo:XOO0239"/>
<dbReference type="HOGENOM" id="CLU_023403_2_0_6"/>
<dbReference type="UniPathway" id="UPA00637"/>
<dbReference type="Proteomes" id="UP000006735">
    <property type="component" value="Chromosome"/>
</dbReference>
<dbReference type="GO" id="GO:0030288">
    <property type="term" value="C:outer membrane-bounded periplasmic space"/>
    <property type="evidence" value="ECO:0007669"/>
    <property type="project" value="TreeGrafter"/>
</dbReference>
<dbReference type="GO" id="GO:0030246">
    <property type="term" value="F:carbohydrate binding"/>
    <property type="evidence" value="ECO:0007669"/>
    <property type="project" value="InterPro"/>
</dbReference>
<dbReference type="GO" id="GO:0003824">
    <property type="term" value="F:catalytic activity"/>
    <property type="evidence" value="ECO:0007669"/>
    <property type="project" value="InterPro"/>
</dbReference>
<dbReference type="GO" id="GO:0051274">
    <property type="term" value="P:beta-glucan biosynthetic process"/>
    <property type="evidence" value="ECO:0007669"/>
    <property type="project" value="TreeGrafter"/>
</dbReference>
<dbReference type="FunFam" id="2.60.40.10:FF:002063">
    <property type="entry name" value="Glucans biosynthesis protein D"/>
    <property type="match status" value="1"/>
</dbReference>
<dbReference type="FunFam" id="2.70.98.10:FF:000001">
    <property type="entry name" value="Glucans biosynthesis protein G"/>
    <property type="match status" value="1"/>
</dbReference>
<dbReference type="Gene3D" id="2.70.98.10">
    <property type="match status" value="1"/>
</dbReference>
<dbReference type="Gene3D" id="2.60.40.10">
    <property type="entry name" value="Immunoglobulins"/>
    <property type="match status" value="1"/>
</dbReference>
<dbReference type="HAMAP" id="MF_01068">
    <property type="entry name" value="MdoD_OpgD"/>
    <property type="match status" value="1"/>
</dbReference>
<dbReference type="InterPro" id="IPR011013">
    <property type="entry name" value="Gal_mutarotase_sf_dom"/>
</dbReference>
<dbReference type="InterPro" id="IPR014718">
    <property type="entry name" value="GH-type_carb-bd"/>
</dbReference>
<dbReference type="InterPro" id="IPR023724">
    <property type="entry name" value="Glucan_biosyn_MdoD"/>
</dbReference>
<dbReference type="InterPro" id="IPR014438">
    <property type="entry name" value="Glucan_biosyn_MdoG/MdoD"/>
</dbReference>
<dbReference type="InterPro" id="IPR007444">
    <property type="entry name" value="Glucan_biosyn_MdoG_C"/>
</dbReference>
<dbReference type="InterPro" id="IPR013783">
    <property type="entry name" value="Ig-like_fold"/>
</dbReference>
<dbReference type="InterPro" id="IPR014756">
    <property type="entry name" value="Ig_E-set"/>
</dbReference>
<dbReference type="InterPro" id="IPR006311">
    <property type="entry name" value="TAT_signal"/>
</dbReference>
<dbReference type="PANTHER" id="PTHR30504">
    <property type="entry name" value="GLUCANS BIOSYNTHESIS PROTEIN"/>
    <property type="match status" value="1"/>
</dbReference>
<dbReference type="PANTHER" id="PTHR30504:SF3">
    <property type="entry name" value="GLUCANS BIOSYNTHESIS PROTEIN D"/>
    <property type="match status" value="1"/>
</dbReference>
<dbReference type="Pfam" id="PF04349">
    <property type="entry name" value="MdoG"/>
    <property type="match status" value="1"/>
</dbReference>
<dbReference type="PIRSF" id="PIRSF006281">
    <property type="entry name" value="MdoG"/>
    <property type="match status" value="1"/>
</dbReference>
<dbReference type="SUPFAM" id="SSF81296">
    <property type="entry name" value="E set domains"/>
    <property type="match status" value="1"/>
</dbReference>
<dbReference type="SUPFAM" id="SSF74650">
    <property type="entry name" value="Galactose mutarotase-like"/>
    <property type="match status" value="1"/>
</dbReference>
<dbReference type="PROSITE" id="PS51318">
    <property type="entry name" value="TAT"/>
    <property type="match status" value="1"/>
</dbReference>
<reference key="1">
    <citation type="journal article" date="2005" name="Nucleic Acids Res.">
        <title>The genome sequence of Xanthomonas oryzae pathovar oryzae KACC10331, the bacterial blight pathogen of rice.</title>
        <authorList>
            <person name="Lee B.-M."/>
            <person name="Park Y.-J."/>
            <person name="Park D.-S."/>
            <person name="Kang H.-W."/>
            <person name="Kim J.-G."/>
            <person name="Song E.-S."/>
            <person name="Park I.-C."/>
            <person name="Yoon U.-H."/>
            <person name="Hahn J.-H."/>
            <person name="Koo B.-S."/>
            <person name="Lee G.-B."/>
            <person name="Kim H."/>
            <person name="Park H.-S."/>
            <person name="Yoon K.-O."/>
            <person name="Kim J.-H."/>
            <person name="Jung C.-H."/>
            <person name="Koh N.-H."/>
            <person name="Seo J.-S."/>
            <person name="Go S.-J."/>
        </authorList>
    </citation>
    <scope>NUCLEOTIDE SEQUENCE [LARGE SCALE GENOMIC DNA]</scope>
    <source>
        <strain>KACC10331 / KXO85</strain>
    </source>
</reference>
<gene>
    <name evidence="1" type="primary">opgD</name>
    <name type="ordered locus">XOO0239</name>
</gene>
<protein>
    <recommendedName>
        <fullName evidence="1">Glucans biosynthesis protein D</fullName>
    </recommendedName>
</protein>
<feature type="signal peptide" description="Tat-type signal" evidence="1">
    <location>
        <begin position="1"/>
        <end position="30"/>
    </location>
</feature>
<feature type="chain" id="PRO_1000064555" description="Glucans biosynthesis protein D">
    <location>
        <begin position="31"/>
        <end position="534"/>
    </location>
</feature>
<comment type="function">
    <text evidence="1">Probably involved in the control of the structural glucose backbone of osmoregulated periplasmic glucans (OPGs).</text>
</comment>
<comment type="pathway">
    <text evidence="1">Glycan metabolism; osmoregulated periplasmic glucan (OPG) biosynthesis.</text>
</comment>
<comment type="subcellular location">
    <subcellularLocation>
        <location evidence="1">Periplasm</location>
    </subcellularLocation>
</comment>
<comment type="PTM">
    <text>Predicted to be exported by the Tat system. The position of the signal peptide cleavage has not been experimentally proven.</text>
</comment>
<comment type="similarity">
    <text evidence="1">Belongs to the OpgD/OpgG family.</text>
</comment>
<organism>
    <name type="scientific">Xanthomonas oryzae pv. oryzae (strain KACC10331 / KXO85)</name>
    <dbReference type="NCBI Taxonomy" id="291331"/>
    <lineage>
        <taxon>Bacteria</taxon>
        <taxon>Pseudomonadati</taxon>
        <taxon>Pseudomonadota</taxon>
        <taxon>Gammaproteobacteria</taxon>
        <taxon>Lysobacterales</taxon>
        <taxon>Lysobacteraceae</taxon>
        <taxon>Xanthomonas</taxon>
    </lineage>
</organism>
<name>OPGD_XANOR</name>
<sequence length="534" mass="59869">MRMQRRHLLKNAAAALAALGLPALPQWALAAKAVGLRRLGQPQPFDYAWLKGRARELAKAPYKSHKQVLPGPLEALNWDQYQSIRYRQDHALWADGNGKFQAKFFHLGLYFHTPVHIYDIVDGKAQQLAYDPAAFDYGKSGLGGKQLPKDLGFAGFRLNTRKDTERDFSAFLGASYFRAVGKEGQYGQSARGLAIDTGTGGPEEFPDFIAYYLEQPAADSNTVVVYGLLDSPSIAGAYRFAITNGDVLLMDIDSALYPRKTIERLGIGPCTSMYQVGENDNRMDWDWRPEIHDTDGLAMWTGGGEWIWRPLCNPPHVRFNMFVDENPRGFGLLQRDRNFDHYQDDGVFYEKRPCLWVEPKSGWGKGSVQLVEIPTVDETFDNIVAFWNPQAKPQPGQELLMGYRLYWGVQPPASAPLAHCVATRTGLGGIVGQKRSHFSWRFAVDFAGGELAALAKDPKAKVEAVLQVSRGTTEIVSARPLHELKGYRAMFDLVPPDEGTQQIDIRLYLRANGKPLTETWLYQWTPLAASERKN</sequence>
<evidence type="ECO:0000255" key="1">
    <source>
        <dbReference type="HAMAP-Rule" id="MF_01068"/>
    </source>
</evidence>
<keyword id="KW-0574">Periplasm</keyword>
<keyword id="KW-1185">Reference proteome</keyword>
<keyword id="KW-0732">Signal</keyword>